<accession>P51549</accession>
<dbReference type="EC" id="1.1.1.1"/>
<dbReference type="EMBL" id="U48715">
    <property type="protein sequence ID" value="AAB40356.1"/>
    <property type="molecule type" value="Genomic_DNA"/>
</dbReference>
<dbReference type="SMR" id="P51549"/>
<dbReference type="FlyBase" id="FBgn0012345">
    <property type="gene designation" value="Dhaw\Adh"/>
</dbReference>
<dbReference type="GO" id="GO:0005737">
    <property type="term" value="C:cytoplasm"/>
    <property type="evidence" value="ECO:0007669"/>
    <property type="project" value="TreeGrafter"/>
</dbReference>
<dbReference type="GO" id="GO:0004022">
    <property type="term" value="F:alcohol dehydrogenase (NAD+) activity"/>
    <property type="evidence" value="ECO:0000250"/>
    <property type="project" value="UniProtKB"/>
</dbReference>
<dbReference type="GO" id="GO:0006066">
    <property type="term" value="P:alcohol metabolic process"/>
    <property type="evidence" value="ECO:0007669"/>
    <property type="project" value="InterPro"/>
</dbReference>
<dbReference type="CDD" id="cd05323">
    <property type="entry name" value="ADH_SDR_c_like"/>
    <property type="match status" value="1"/>
</dbReference>
<dbReference type="FunFam" id="3.40.50.720:FF:000302">
    <property type="entry name" value="Alcohol dehydrogenase"/>
    <property type="match status" value="1"/>
</dbReference>
<dbReference type="Gene3D" id="3.40.50.720">
    <property type="entry name" value="NAD(P)-binding Rossmann-like Domain"/>
    <property type="match status" value="1"/>
</dbReference>
<dbReference type="InterPro" id="IPR002425">
    <property type="entry name" value="ADH_Drosophila-type"/>
</dbReference>
<dbReference type="InterPro" id="IPR036291">
    <property type="entry name" value="NAD(P)-bd_dom_sf"/>
</dbReference>
<dbReference type="InterPro" id="IPR020904">
    <property type="entry name" value="Sc_DH/Rdtase_CS"/>
</dbReference>
<dbReference type="InterPro" id="IPR002347">
    <property type="entry name" value="SDR_fam"/>
</dbReference>
<dbReference type="PANTHER" id="PTHR44229">
    <property type="entry name" value="15-HYDROXYPROSTAGLANDIN DEHYDROGENASE [NAD(+)]"/>
    <property type="match status" value="1"/>
</dbReference>
<dbReference type="PANTHER" id="PTHR44229:SF8">
    <property type="entry name" value="ALCOHOL DEHYDROGENASE-RELATED"/>
    <property type="match status" value="1"/>
</dbReference>
<dbReference type="Pfam" id="PF00106">
    <property type="entry name" value="adh_short"/>
    <property type="match status" value="1"/>
</dbReference>
<dbReference type="PRINTS" id="PR01168">
    <property type="entry name" value="ALCDHDRGNASE"/>
</dbReference>
<dbReference type="PRINTS" id="PR01167">
    <property type="entry name" value="INSADHFAMILY"/>
</dbReference>
<dbReference type="PRINTS" id="PR00080">
    <property type="entry name" value="SDRFAMILY"/>
</dbReference>
<dbReference type="SUPFAM" id="SSF51735">
    <property type="entry name" value="NAD(P)-binding Rossmann-fold domains"/>
    <property type="match status" value="1"/>
</dbReference>
<dbReference type="PROSITE" id="PS00061">
    <property type="entry name" value="ADH_SHORT"/>
    <property type="match status" value="1"/>
</dbReference>
<proteinExistence type="inferred from homology"/>
<keyword id="KW-0520">NAD</keyword>
<keyword id="KW-0560">Oxidoreductase</keyword>
<gene>
    <name type="primary">Adh</name>
</gene>
<reference key="1">
    <citation type="journal article" date="1996" name="Gene">
        <title>Molecular organization of the alcohol dehydrogenase loci of Drosophila grimshawi and Drosophila hawaiiensis.</title>
        <authorList>
            <person name="Brennan M.D."/>
            <person name="Thorpe P.A."/>
            <person name="Hu J."/>
            <person name="Dickinson W.J."/>
        </authorList>
    </citation>
    <scope>NUCLEOTIDE SEQUENCE [GENOMIC DNA]</scope>
    <source>
        <strain>J14B8</strain>
    </source>
</reference>
<evidence type="ECO:0000250" key="1"/>
<evidence type="ECO:0000255" key="2">
    <source>
        <dbReference type="PROSITE-ProRule" id="PRU10001"/>
    </source>
</evidence>
<evidence type="ECO:0000305" key="3"/>
<sequence>MVIANSNIIFVAGLGGIGLDTSREIVKSGPKNLVLLDRIDNPAAIAELKALNPKVTVTFYPYDVTVPLAETKKLLKTIFDKLKTVDLLINGAGILDDNQIERTIAVNFTGLVNTTTAILDFWDKRKGGPVGVVANICSVTGFNSIYQVPVYSASKAAALSFTTSIAKLAHITGVTAYSINPGITKTVLEHSFNSWLNVEPRVAELLLEHPTQTTLQCAQNFVKAIEANQNGAIWKLDLGRLDAIEWTKRWDSGI</sequence>
<name>ADH_DROHA</name>
<comment type="catalytic activity">
    <reaction evidence="2">
        <text>a primary alcohol + NAD(+) = an aldehyde + NADH + H(+)</text>
        <dbReference type="Rhea" id="RHEA:10736"/>
        <dbReference type="ChEBI" id="CHEBI:15378"/>
        <dbReference type="ChEBI" id="CHEBI:15734"/>
        <dbReference type="ChEBI" id="CHEBI:17478"/>
        <dbReference type="ChEBI" id="CHEBI:57540"/>
        <dbReference type="ChEBI" id="CHEBI:57945"/>
        <dbReference type="EC" id="1.1.1.1"/>
    </reaction>
</comment>
<comment type="catalytic activity">
    <reaction evidence="2">
        <text>a secondary alcohol + NAD(+) = a ketone + NADH + H(+)</text>
        <dbReference type="Rhea" id="RHEA:10740"/>
        <dbReference type="ChEBI" id="CHEBI:15378"/>
        <dbReference type="ChEBI" id="CHEBI:17087"/>
        <dbReference type="ChEBI" id="CHEBI:35681"/>
        <dbReference type="ChEBI" id="CHEBI:57540"/>
        <dbReference type="ChEBI" id="CHEBI:57945"/>
        <dbReference type="EC" id="1.1.1.1"/>
    </reaction>
</comment>
<comment type="subunit">
    <text>Homodimer.</text>
</comment>
<comment type="similarity">
    <text evidence="3">Belongs to the short-chain dehydrogenases/reductases (SDR) family.</text>
</comment>
<organism>
    <name type="scientific">Drosophila hawaiiensis</name>
    <name type="common">Fruit fly</name>
    <dbReference type="NCBI Taxonomy" id="46435"/>
    <lineage>
        <taxon>Eukaryota</taxon>
        <taxon>Metazoa</taxon>
        <taxon>Ecdysozoa</taxon>
        <taxon>Arthropoda</taxon>
        <taxon>Hexapoda</taxon>
        <taxon>Insecta</taxon>
        <taxon>Pterygota</taxon>
        <taxon>Neoptera</taxon>
        <taxon>Endopterygota</taxon>
        <taxon>Diptera</taxon>
        <taxon>Brachycera</taxon>
        <taxon>Muscomorpha</taxon>
        <taxon>Ephydroidea</taxon>
        <taxon>Drosophilidae</taxon>
        <taxon>Drosophila</taxon>
        <taxon>Hawaiian Drosophila</taxon>
    </lineage>
</organism>
<feature type="initiator methionine" description="Removed" evidence="1">
    <location>
        <position position="1"/>
    </location>
</feature>
<feature type="chain" id="PRO_0000054464" description="Alcohol dehydrogenase">
    <location>
        <begin position="2"/>
        <end position="254"/>
    </location>
</feature>
<feature type="active site" description="Proton acceptor" evidence="2">
    <location>
        <position position="151"/>
    </location>
</feature>
<feature type="binding site" evidence="1">
    <location>
        <begin position="10"/>
        <end position="33"/>
    </location>
    <ligand>
        <name>NAD(+)</name>
        <dbReference type="ChEBI" id="CHEBI:57540"/>
    </ligand>
</feature>
<feature type="binding site" evidence="1">
    <location>
        <position position="138"/>
    </location>
    <ligand>
        <name>substrate</name>
    </ligand>
</feature>
<protein>
    <recommendedName>
        <fullName>Alcohol dehydrogenase</fullName>
        <ecNumber>1.1.1.1</ecNumber>
    </recommendedName>
</protein>